<keyword id="KW-0067">ATP-binding</keyword>
<keyword id="KW-0963">Cytoplasm</keyword>
<keyword id="KW-0329">Glyoxylate bypass</keyword>
<keyword id="KW-0378">Hydrolase</keyword>
<keyword id="KW-0418">Kinase</keyword>
<keyword id="KW-0547">Nucleotide-binding</keyword>
<keyword id="KW-0904">Protein phosphatase</keyword>
<keyword id="KW-0723">Serine/threonine-protein kinase</keyword>
<keyword id="KW-0808">Transferase</keyword>
<keyword id="KW-0816">Tricarboxylic acid cycle</keyword>
<comment type="function">
    <text evidence="1">Bifunctional enzyme which can phosphorylate or dephosphorylate isocitrate dehydrogenase (IDH) on a specific serine residue. This is a regulatory mechanism which enables bacteria to bypass the Krebs cycle via the glyoxylate shunt in response to the source of carbon. When bacteria are grown on glucose, IDH is fully active and unphosphorylated, but when grown on acetate or ethanol, the activity of IDH declines drastically concomitant with its phosphorylation.</text>
</comment>
<comment type="catalytic activity">
    <reaction evidence="1">
        <text>L-seryl-[isocitrate dehydrogenase] + ATP = O-phospho-L-seryl-[isocitrate dehydrogenase] + ADP + H(+)</text>
        <dbReference type="Rhea" id="RHEA:43540"/>
        <dbReference type="Rhea" id="RHEA-COMP:10605"/>
        <dbReference type="Rhea" id="RHEA-COMP:10606"/>
        <dbReference type="ChEBI" id="CHEBI:15378"/>
        <dbReference type="ChEBI" id="CHEBI:29999"/>
        <dbReference type="ChEBI" id="CHEBI:30616"/>
        <dbReference type="ChEBI" id="CHEBI:83421"/>
        <dbReference type="ChEBI" id="CHEBI:456216"/>
        <dbReference type="EC" id="2.7.11.5"/>
    </reaction>
</comment>
<comment type="subcellular location">
    <subcellularLocation>
        <location evidence="1">Cytoplasm</location>
    </subcellularLocation>
</comment>
<comment type="similarity">
    <text evidence="1">Belongs to the AceK family.</text>
</comment>
<accession>Q6NCX0</accession>
<name>ACEK_RHOPA</name>
<reference key="1">
    <citation type="journal article" date="2004" name="Nat. Biotechnol.">
        <title>Complete genome sequence of the metabolically versatile photosynthetic bacterium Rhodopseudomonas palustris.</title>
        <authorList>
            <person name="Larimer F.W."/>
            <person name="Chain P."/>
            <person name="Hauser L."/>
            <person name="Lamerdin J.E."/>
            <person name="Malfatti S."/>
            <person name="Do L."/>
            <person name="Land M.L."/>
            <person name="Pelletier D.A."/>
            <person name="Beatty J.T."/>
            <person name="Lang A.S."/>
            <person name="Tabita F.R."/>
            <person name="Gibson J.L."/>
            <person name="Hanson T.E."/>
            <person name="Bobst C."/>
            <person name="Torres y Torres J.L."/>
            <person name="Peres C."/>
            <person name="Harrison F.H."/>
            <person name="Gibson J."/>
            <person name="Harwood C.S."/>
        </authorList>
    </citation>
    <scope>NUCLEOTIDE SEQUENCE [LARGE SCALE GENOMIC DNA]</scope>
    <source>
        <strain>ATCC BAA-98 / CGA009</strain>
    </source>
</reference>
<proteinExistence type="inferred from homology"/>
<feature type="chain" id="PRO_0000288298" description="Isocitrate dehydrogenase kinase/phosphatase">
    <location>
        <begin position="1"/>
        <end position="610"/>
    </location>
</feature>
<feature type="active site" evidence="1">
    <location>
        <position position="419"/>
    </location>
</feature>
<feature type="binding site" evidence="1">
    <location>
        <begin position="359"/>
        <end position="365"/>
    </location>
    <ligand>
        <name>ATP</name>
        <dbReference type="ChEBI" id="CHEBI:30616"/>
    </ligand>
</feature>
<feature type="binding site" evidence="1">
    <location>
        <position position="380"/>
    </location>
    <ligand>
        <name>ATP</name>
        <dbReference type="ChEBI" id="CHEBI:30616"/>
    </ligand>
</feature>
<gene>
    <name evidence="1" type="primary">aceK</name>
    <name type="ordered locus">RPA0347</name>
</gene>
<sequence length="610" mass="67975">MTATASHTRARPLGASEIEHATRIAEPDFDLLDALYRTDDPDDQARLLARVVLSAFDNYYAVSRRIPALAQAAFEARDWPVTVRLSKIRIGLYTACIDQLVPLLKAGLPELTTDEQLWPTAEAELLAAIEGRYEADFAFAFWQSLRRKLVSDEWRPVSYDAGSTARRTTSPAAVLKTTATTLPITAEVIAGILDEAGFRVPWRDRDGDAALAAQAIETALEPLSPRPGEPVKIEIADSGFLRNRGACLVGRIKLRDRGDMPMRNLPLLIALLNEKDGLVVDAVLTDSDELQYAFSSTLANYHATNPRYHELARLLYELMPKRPLGTQYSCIGFHHLGKVAVMSEILAEHRKTKEKLATAPGFKGTVAIAFTMPSSAYVLKIIRDHPTDDYKFDYFDGLDEVLRKYNLVHEIDRAGSMLDNIIYSNVKLDRAMFAPELLDELLEAGIGTVTLDRGALVFRHLIVQIKLTPLPLYLANASAAESRAAVINLGDCIKNNAAADIFNKDLDGRNYGVSRIRKVYLFDYDAVEPLTSVTVSRDGAAPGEFDNGMVFRPQEMLEGLRIDDPGLRRAFRDAHPELMQADYWEGMQQALRDGKVPKVMNYPASRRLRR</sequence>
<organism>
    <name type="scientific">Rhodopseudomonas palustris (strain ATCC BAA-98 / CGA009)</name>
    <dbReference type="NCBI Taxonomy" id="258594"/>
    <lineage>
        <taxon>Bacteria</taxon>
        <taxon>Pseudomonadati</taxon>
        <taxon>Pseudomonadota</taxon>
        <taxon>Alphaproteobacteria</taxon>
        <taxon>Hyphomicrobiales</taxon>
        <taxon>Nitrobacteraceae</taxon>
        <taxon>Rhodopseudomonas</taxon>
    </lineage>
</organism>
<evidence type="ECO:0000255" key="1">
    <source>
        <dbReference type="HAMAP-Rule" id="MF_00747"/>
    </source>
</evidence>
<protein>
    <recommendedName>
        <fullName evidence="1">Isocitrate dehydrogenase kinase/phosphatase</fullName>
        <shortName evidence="1">IDH kinase/phosphatase</shortName>
        <shortName evidence="1">IDHK/P</shortName>
        <ecNumber evidence="1">2.7.11.5</ecNumber>
        <ecNumber evidence="1">3.1.3.-</ecNumber>
    </recommendedName>
</protein>
<dbReference type="EC" id="2.7.11.5" evidence="1"/>
<dbReference type="EC" id="3.1.3.-" evidence="1"/>
<dbReference type="EMBL" id="BX572594">
    <property type="protein sequence ID" value="CAE25791.1"/>
    <property type="molecule type" value="Genomic_DNA"/>
</dbReference>
<dbReference type="RefSeq" id="WP_011155915.1">
    <property type="nucleotide sequence ID" value="NZ_CP116810.1"/>
</dbReference>
<dbReference type="SMR" id="Q6NCX0"/>
<dbReference type="STRING" id="258594.RPA0347"/>
<dbReference type="GeneID" id="66891358"/>
<dbReference type="eggNOG" id="COG4579">
    <property type="taxonomic scope" value="Bacteria"/>
</dbReference>
<dbReference type="HOGENOM" id="CLU_033804_1_1_5"/>
<dbReference type="PhylomeDB" id="Q6NCX0"/>
<dbReference type="GO" id="GO:0005737">
    <property type="term" value="C:cytoplasm"/>
    <property type="evidence" value="ECO:0007669"/>
    <property type="project" value="UniProtKB-SubCell"/>
</dbReference>
<dbReference type="GO" id="GO:0008772">
    <property type="term" value="F:[isocitrate dehydrogenase (NADP+)] kinase activity"/>
    <property type="evidence" value="ECO:0007669"/>
    <property type="project" value="UniProtKB-UniRule"/>
</dbReference>
<dbReference type="GO" id="GO:0016208">
    <property type="term" value="F:AMP binding"/>
    <property type="evidence" value="ECO:0007669"/>
    <property type="project" value="TreeGrafter"/>
</dbReference>
<dbReference type="GO" id="GO:0005524">
    <property type="term" value="F:ATP binding"/>
    <property type="evidence" value="ECO:0007669"/>
    <property type="project" value="UniProtKB-UniRule"/>
</dbReference>
<dbReference type="GO" id="GO:0004721">
    <property type="term" value="F:phosphoprotein phosphatase activity"/>
    <property type="evidence" value="ECO:0007669"/>
    <property type="project" value="UniProtKB-KW"/>
</dbReference>
<dbReference type="GO" id="GO:0004674">
    <property type="term" value="F:protein serine/threonine kinase activity"/>
    <property type="evidence" value="ECO:0007669"/>
    <property type="project" value="UniProtKB-KW"/>
</dbReference>
<dbReference type="GO" id="GO:0006006">
    <property type="term" value="P:glucose metabolic process"/>
    <property type="evidence" value="ECO:0007669"/>
    <property type="project" value="InterPro"/>
</dbReference>
<dbReference type="GO" id="GO:0006097">
    <property type="term" value="P:glyoxylate cycle"/>
    <property type="evidence" value="ECO:0007669"/>
    <property type="project" value="UniProtKB-UniRule"/>
</dbReference>
<dbReference type="GO" id="GO:0006099">
    <property type="term" value="P:tricarboxylic acid cycle"/>
    <property type="evidence" value="ECO:0007669"/>
    <property type="project" value="UniProtKB-UniRule"/>
</dbReference>
<dbReference type="HAMAP" id="MF_00747">
    <property type="entry name" value="AceK"/>
    <property type="match status" value="1"/>
</dbReference>
<dbReference type="InterPro" id="IPR046855">
    <property type="entry name" value="AceK_kinase"/>
</dbReference>
<dbReference type="InterPro" id="IPR046854">
    <property type="entry name" value="AceK_regulatory"/>
</dbReference>
<dbReference type="InterPro" id="IPR010452">
    <property type="entry name" value="Isocitrate_DH_AceK"/>
</dbReference>
<dbReference type="NCBIfam" id="NF002804">
    <property type="entry name" value="PRK02946.1"/>
    <property type="match status" value="1"/>
</dbReference>
<dbReference type="PANTHER" id="PTHR39559">
    <property type="match status" value="1"/>
</dbReference>
<dbReference type="PANTHER" id="PTHR39559:SF1">
    <property type="entry name" value="ISOCITRATE DEHYDROGENASE KINASE_PHOSPHATASE"/>
    <property type="match status" value="1"/>
</dbReference>
<dbReference type="Pfam" id="PF06315">
    <property type="entry name" value="AceK_kinase"/>
    <property type="match status" value="1"/>
</dbReference>
<dbReference type="Pfam" id="PF20423">
    <property type="entry name" value="AceK_regulatory"/>
    <property type="match status" value="1"/>
</dbReference>
<dbReference type="PIRSF" id="PIRSF000719">
    <property type="entry name" value="AceK"/>
    <property type="match status" value="1"/>
</dbReference>